<proteinExistence type="inferred from homology"/>
<protein>
    <recommendedName>
        <fullName evidence="1">Cytochrome b6-f complex subunit 7</fullName>
    </recommendedName>
    <alternativeName>
        <fullName evidence="1">Cytochrome b6-f complex subunit PetM</fullName>
    </alternativeName>
    <alternativeName>
        <fullName evidence="1">Cytochrome b6-f complex subunit VII</fullName>
    </alternativeName>
</protein>
<comment type="function">
    <text evidence="1">Component of the cytochrome b6-f complex, which mediates electron transfer between photosystem II (PSII) and photosystem I (PSI), cyclic electron flow around PSI, and state transitions.</text>
</comment>
<comment type="subunit">
    <text evidence="1">The 4 large subunits of the cytochrome b6-f complex are cytochrome b6, subunit IV (17 kDa polypeptide, PetD), cytochrome f and the Rieske protein, while the 4 small subunits are PetG, PetL, PetM and PetN. The complex functions as a dimer.</text>
</comment>
<comment type="subcellular location">
    <subcellularLocation>
        <location evidence="1">Cellular thylakoid membrane</location>
        <topology evidence="1">Single-pass membrane protein</topology>
    </subcellularLocation>
</comment>
<comment type="similarity">
    <text evidence="1">Belongs to the PetM family.</text>
</comment>
<organism>
    <name type="scientific">Prochlorococcus marinus (strain MIT 9211)</name>
    <dbReference type="NCBI Taxonomy" id="93059"/>
    <lineage>
        <taxon>Bacteria</taxon>
        <taxon>Bacillati</taxon>
        <taxon>Cyanobacteriota</taxon>
        <taxon>Cyanophyceae</taxon>
        <taxon>Synechococcales</taxon>
        <taxon>Prochlorococcaceae</taxon>
        <taxon>Prochlorococcus</taxon>
    </lineage>
</organism>
<name>PETM_PROM4</name>
<feature type="chain" id="PRO_1000192352" description="Cytochrome b6-f complex subunit 7">
    <location>
        <begin position="1"/>
        <end position="32"/>
    </location>
</feature>
<feature type="transmembrane region" description="Helical" evidence="1">
    <location>
        <begin position="9"/>
        <end position="27"/>
    </location>
</feature>
<dbReference type="EMBL" id="CP000878">
    <property type="protein sequence ID" value="ABX09159.1"/>
    <property type="molecule type" value="Genomic_DNA"/>
</dbReference>
<dbReference type="RefSeq" id="WP_012195780.1">
    <property type="nucleotide sequence ID" value="NC_009976.1"/>
</dbReference>
<dbReference type="SMR" id="A9BBE7"/>
<dbReference type="STRING" id="93059.P9211_12281"/>
<dbReference type="KEGG" id="pmj:P9211_12281"/>
<dbReference type="HOGENOM" id="CLU_216743_1_0_3"/>
<dbReference type="OrthoDB" id="541882at2"/>
<dbReference type="Proteomes" id="UP000000788">
    <property type="component" value="Chromosome"/>
</dbReference>
<dbReference type="GO" id="GO:0009512">
    <property type="term" value="C:cytochrome b6f complex"/>
    <property type="evidence" value="ECO:0007669"/>
    <property type="project" value="InterPro"/>
</dbReference>
<dbReference type="GO" id="GO:0031676">
    <property type="term" value="C:plasma membrane-derived thylakoid membrane"/>
    <property type="evidence" value="ECO:0007669"/>
    <property type="project" value="UniProtKB-SubCell"/>
</dbReference>
<dbReference type="GO" id="GO:0009055">
    <property type="term" value="F:electron transfer activity"/>
    <property type="evidence" value="ECO:0007669"/>
    <property type="project" value="UniProtKB-UniRule"/>
</dbReference>
<dbReference type="GO" id="GO:0015979">
    <property type="term" value="P:photosynthesis"/>
    <property type="evidence" value="ECO:0007669"/>
    <property type="project" value="UniProtKB-KW"/>
</dbReference>
<dbReference type="HAMAP" id="MF_00396">
    <property type="entry name" value="Cytb6_f_PetM"/>
    <property type="match status" value="1"/>
</dbReference>
<dbReference type="InterPro" id="IPR012595">
    <property type="entry name" value="PetM_cyt_b6/f_cplx_su7"/>
</dbReference>
<dbReference type="NCBIfam" id="NF008826">
    <property type="entry name" value="PRK11876.1-2"/>
    <property type="match status" value="1"/>
</dbReference>
<dbReference type="Pfam" id="PF08041">
    <property type="entry name" value="PetM"/>
    <property type="match status" value="1"/>
</dbReference>
<keyword id="KW-0249">Electron transport</keyword>
<keyword id="KW-0472">Membrane</keyword>
<keyword id="KW-0602">Photosynthesis</keyword>
<keyword id="KW-1185">Reference proteome</keyword>
<keyword id="KW-0793">Thylakoid</keyword>
<keyword id="KW-0812">Transmembrane</keyword>
<keyword id="KW-1133">Transmembrane helix</keyword>
<keyword id="KW-0813">Transport</keyword>
<evidence type="ECO:0000255" key="1">
    <source>
        <dbReference type="HAMAP-Rule" id="MF_00396"/>
    </source>
</evidence>
<accession>A9BBE7</accession>
<gene>
    <name evidence="1" type="primary">petM</name>
    <name type="ordered locus">P9211_12281</name>
</gene>
<sequence>MASEIFGTAAVFWVLIPVGLLGGAILLKLQGD</sequence>
<reference key="1">
    <citation type="journal article" date="2007" name="PLoS Genet.">
        <title>Patterns and implications of gene gain and loss in the evolution of Prochlorococcus.</title>
        <authorList>
            <person name="Kettler G.C."/>
            <person name="Martiny A.C."/>
            <person name="Huang K."/>
            <person name="Zucker J."/>
            <person name="Coleman M.L."/>
            <person name="Rodrigue S."/>
            <person name="Chen F."/>
            <person name="Lapidus A."/>
            <person name="Ferriera S."/>
            <person name="Johnson J."/>
            <person name="Steglich C."/>
            <person name="Church G.M."/>
            <person name="Richardson P."/>
            <person name="Chisholm S.W."/>
        </authorList>
    </citation>
    <scope>NUCLEOTIDE SEQUENCE [LARGE SCALE GENOMIC DNA]</scope>
    <source>
        <strain>MIT 9211</strain>
    </source>
</reference>